<dbReference type="EMBL" id="AB109196">
    <property type="protein sequence ID" value="BAC76392.1"/>
    <property type="molecule type" value="mRNA"/>
</dbReference>
<dbReference type="EMBL" id="AB109197">
    <property type="protein sequence ID" value="BAC76393.1"/>
    <property type="molecule type" value="mRNA"/>
</dbReference>
<dbReference type="EMBL" id="AC021640">
    <property type="protein sequence ID" value="AAF32461.1"/>
    <property type="molecule type" value="Genomic_DNA"/>
</dbReference>
<dbReference type="EMBL" id="CP002686">
    <property type="protein sequence ID" value="AEE73824.1"/>
    <property type="molecule type" value="Genomic_DNA"/>
</dbReference>
<dbReference type="EMBL" id="AY039562">
    <property type="protein sequence ID" value="AAK62617.1"/>
    <property type="molecule type" value="mRNA"/>
</dbReference>
<dbReference type="EMBL" id="AY113034">
    <property type="protein sequence ID" value="AAM47342.1"/>
    <property type="molecule type" value="mRNA"/>
</dbReference>
<dbReference type="RefSeq" id="NP_186903.1">
    <molecule id="Q84L31-1"/>
    <property type="nucleotide sequence ID" value="NM_111121.4"/>
</dbReference>
<dbReference type="SMR" id="Q84L31"/>
<dbReference type="BioGRID" id="6528">
    <property type="interactions" value="5"/>
</dbReference>
<dbReference type="DIP" id="DIP-57199N"/>
<dbReference type="FunCoup" id="Q84L31">
    <property type="interactions" value="3490"/>
</dbReference>
<dbReference type="IntAct" id="Q84L31">
    <property type="interactions" value="6"/>
</dbReference>
<dbReference type="MINT" id="Q84L31"/>
<dbReference type="STRING" id="3702.Q84L31"/>
<dbReference type="TCDB" id="3.A.16.1.5">
    <property type="family name" value="the endoplasmic reticular retrotranslocon (er-rt) family"/>
</dbReference>
<dbReference type="GlyGen" id="Q84L31">
    <property type="glycosylation" value="2 sites"/>
</dbReference>
<dbReference type="iPTMnet" id="Q84L31"/>
<dbReference type="PaxDb" id="3702-AT3G02540.1"/>
<dbReference type="ProteomicsDB" id="236955">
    <molecule id="Q84L31-1"/>
</dbReference>
<dbReference type="EnsemblPlants" id="AT3G02540.1">
    <molecule id="Q84L31-1"/>
    <property type="protein sequence ID" value="AT3G02540.1"/>
    <property type="gene ID" value="AT3G02540"/>
</dbReference>
<dbReference type="GeneID" id="821195"/>
<dbReference type="Gramene" id="AT3G02540.1">
    <molecule id="Q84L31-1"/>
    <property type="protein sequence ID" value="AT3G02540.1"/>
    <property type="gene ID" value="AT3G02540"/>
</dbReference>
<dbReference type="KEGG" id="ath:AT3G02540"/>
<dbReference type="Araport" id="AT3G02540"/>
<dbReference type="TAIR" id="AT3G02540">
    <property type="gene designation" value="RAD23C"/>
</dbReference>
<dbReference type="eggNOG" id="KOG0011">
    <property type="taxonomic scope" value="Eukaryota"/>
</dbReference>
<dbReference type="HOGENOM" id="CLU_040364_0_0_1"/>
<dbReference type="InParanoid" id="Q84L31"/>
<dbReference type="OMA" id="HEFENDQ"/>
<dbReference type="PhylomeDB" id="Q84L31"/>
<dbReference type="PRO" id="PR:Q84L31"/>
<dbReference type="Proteomes" id="UP000006548">
    <property type="component" value="Chromosome 3"/>
</dbReference>
<dbReference type="ExpressionAtlas" id="Q84L31">
    <property type="expression patterns" value="baseline and differential"/>
</dbReference>
<dbReference type="GO" id="GO:0005737">
    <property type="term" value="C:cytoplasm"/>
    <property type="evidence" value="ECO:0000314"/>
    <property type="project" value="UniProtKB"/>
</dbReference>
<dbReference type="GO" id="GO:0005829">
    <property type="term" value="C:cytosol"/>
    <property type="evidence" value="ECO:0007005"/>
    <property type="project" value="TAIR"/>
</dbReference>
<dbReference type="GO" id="GO:0005634">
    <property type="term" value="C:nucleus"/>
    <property type="evidence" value="ECO:0000314"/>
    <property type="project" value="TAIR"/>
</dbReference>
<dbReference type="GO" id="GO:0003684">
    <property type="term" value="F:damaged DNA binding"/>
    <property type="evidence" value="ECO:0007669"/>
    <property type="project" value="InterPro"/>
</dbReference>
<dbReference type="GO" id="GO:0031593">
    <property type="term" value="F:polyubiquitin modification-dependent protein binding"/>
    <property type="evidence" value="ECO:0000314"/>
    <property type="project" value="UniProtKB"/>
</dbReference>
<dbReference type="GO" id="GO:0070628">
    <property type="term" value="F:proteasome binding"/>
    <property type="evidence" value="ECO:0000314"/>
    <property type="project" value="TAIR"/>
</dbReference>
<dbReference type="GO" id="GO:0043130">
    <property type="term" value="F:ubiquitin binding"/>
    <property type="evidence" value="ECO:0000314"/>
    <property type="project" value="TAIR"/>
</dbReference>
<dbReference type="GO" id="GO:0006289">
    <property type="term" value="P:nucleotide-excision repair"/>
    <property type="evidence" value="ECO:0007669"/>
    <property type="project" value="InterPro"/>
</dbReference>
<dbReference type="GO" id="GO:0043161">
    <property type="term" value="P:proteasome-mediated ubiquitin-dependent protein catabolic process"/>
    <property type="evidence" value="ECO:0007669"/>
    <property type="project" value="InterPro"/>
</dbReference>
<dbReference type="GO" id="GO:0009411">
    <property type="term" value="P:response to UV"/>
    <property type="evidence" value="ECO:0000315"/>
    <property type="project" value="UniProtKB"/>
</dbReference>
<dbReference type="GO" id="GO:0009650">
    <property type="term" value="P:UV protection"/>
    <property type="evidence" value="ECO:0000315"/>
    <property type="project" value="UniProtKB"/>
</dbReference>
<dbReference type="CDD" id="cd14379">
    <property type="entry name" value="UBA1_Rad23_plant"/>
    <property type="match status" value="1"/>
</dbReference>
<dbReference type="CDD" id="cd14382">
    <property type="entry name" value="UBA2_RAD23_plant"/>
    <property type="match status" value="1"/>
</dbReference>
<dbReference type="CDD" id="cd01805">
    <property type="entry name" value="Ubl_Rad23"/>
    <property type="match status" value="1"/>
</dbReference>
<dbReference type="FunFam" id="3.10.20.90:FF:000069">
    <property type="entry name" value="UV excision repair protein RAD23"/>
    <property type="match status" value="1"/>
</dbReference>
<dbReference type="FunFam" id="1.10.10.540:FF:000001">
    <property type="entry name" value="UV excision repair protein RAD23 B"/>
    <property type="match status" value="1"/>
</dbReference>
<dbReference type="FunFam" id="1.10.8.10:FF:000002">
    <property type="entry name" value="UV excision repair protein RAD23 homolog"/>
    <property type="match status" value="1"/>
</dbReference>
<dbReference type="FunFam" id="1.10.8.10:FF:000003">
    <property type="entry name" value="UV excision repair protein RAD23 homolog"/>
    <property type="match status" value="1"/>
</dbReference>
<dbReference type="Gene3D" id="1.10.8.10">
    <property type="entry name" value="DNA helicase RuvA subunit, C-terminal domain"/>
    <property type="match status" value="2"/>
</dbReference>
<dbReference type="Gene3D" id="3.10.20.90">
    <property type="entry name" value="Phosphatidylinositol 3-kinase Catalytic Subunit, Chain A, domain 1"/>
    <property type="match status" value="1"/>
</dbReference>
<dbReference type="Gene3D" id="1.10.10.540">
    <property type="entry name" value="XPC-binding domain"/>
    <property type="match status" value="1"/>
</dbReference>
<dbReference type="InterPro" id="IPR004806">
    <property type="entry name" value="Rad23"/>
</dbReference>
<dbReference type="InterPro" id="IPR006636">
    <property type="entry name" value="STI1_HS-bd"/>
</dbReference>
<dbReference type="InterPro" id="IPR015940">
    <property type="entry name" value="UBA"/>
</dbReference>
<dbReference type="InterPro" id="IPR009060">
    <property type="entry name" value="UBA-like_sf"/>
</dbReference>
<dbReference type="InterPro" id="IPR000626">
    <property type="entry name" value="Ubiquitin-like_dom"/>
</dbReference>
<dbReference type="InterPro" id="IPR029071">
    <property type="entry name" value="Ubiquitin-like_domsf"/>
</dbReference>
<dbReference type="InterPro" id="IPR015360">
    <property type="entry name" value="XPC-bd"/>
</dbReference>
<dbReference type="InterPro" id="IPR036353">
    <property type="entry name" value="XPC-bd_sf"/>
</dbReference>
<dbReference type="NCBIfam" id="TIGR00601">
    <property type="entry name" value="rad23"/>
    <property type="match status" value="1"/>
</dbReference>
<dbReference type="PANTHER" id="PTHR10621:SF35">
    <property type="entry name" value="UBIQUITIN RECEPTOR RAD23C"/>
    <property type="match status" value="1"/>
</dbReference>
<dbReference type="PANTHER" id="PTHR10621">
    <property type="entry name" value="UV EXCISION REPAIR PROTEIN RAD23"/>
    <property type="match status" value="1"/>
</dbReference>
<dbReference type="Pfam" id="PF00627">
    <property type="entry name" value="UBA"/>
    <property type="match status" value="2"/>
</dbReference>
<dbReference type="Pfam" id="PF00240">
    <property type="entry name" value="ubiquitin"/>
    <property type="match status" value="1"/>
</dbReference>
<dbReference type="Pfam" id="PF09280">
    <property type="entry name" value="XPC-binding"/>
    <property type="match status" value="1"/>
</dbReference>
<dbReference type="PRINTS" id="PR01839">
    <property type="entry name" value="RAD23PROTEIN"/>
</dbReference>
<dbReference type="SMART" id="SM00727">
    <property type="entry name" value="STI1"/>
    <property type="match status" value="1"/>
</dbReference>
<dbReference type="SMART" id="SM00165">
    <property type="entry name" value="UBA"/>
    <property type="match status" value="2"/>
</dbReference>
<dbReference type="SMART" id="SM00213">
    <property type="entry name" value="UBQ"/>
    <property type="match status" value="1"/>
</dbReference>
<dbReference type="SUPFAM" id="SSF46934">
    <property type="entry name" value="UBA-like"/>
    <property type="match status" value="2"/>
</dbReference>
<dbReference type="SUPFAM" id="SSF54236">
    <property type="entry name" value="Ubiquitin-like"/>
    <property type="match status" value="1"/>
</dbReference>
<dbReference type="SUPFAM" id="SSF101238">
    <property type="entry name" value="XPC-binding domain"/>
    <property type="match status" value="1"/>
</dbReference>
<dbReference type="PROSITE" id="PS50030">
    <property type="entry name" value="UBA"/>
    <property type="match status" value="2"/>
</dbReference>
<dbReference type="PROSITE" id="PS50053">
    <property type="entry name" value="UBIQUITIN_2"/>
    <property type="match status" value="1"/>
</dbReference>
<gene>
    <name evidence="9" type="primary">RAD23C</name>
    <name evidence="10" type="synonym">RAD23</name>
    <name evidence="10" type="synonym">RAD23-3</name>
    <name evidence="12" type="ordered locus">At3g02540</name>
    <name evidence="13" type="ORF">F16B3.17</name>
</gene>
<comment type="function">
    <text evidence="1 5 7 8">May be involved in nucleotide excision repair (By similarity). Binds and presumably selects ubiquitin-conjugates for destruction. Prefers multiubiquitin chains rather than single ubiquitins, with a binding affinity for 'Lys-48'-linked ubiquitin chains. Acts as a ubiquitin receptor that associates with the 26S proteasomal docking subunit RPN10 for the indirect recognition of ubiquitinated substrates of ubiquitin/26S proteasome-mediated proteolysis (UPP). Involved in UV tolerance in hypocotyls, specifically in dark conditions (PubMed:29283431).</text>
</comment>
<comment type="subunit">
    <text evidence="5 7">Interacts with 'Lys-48'-linked polyubiquitin chains via its both UBA domains. Interacts with RPN10 via its ubiquitin-like domain.</text>
</comment>
<comment type="interaction">
    <interactant intactId="EBI-4437395">
        <id>Q84L31</id>
    </interactant>
    <interactant intactId="EBI-3390054">
        <id>P0CG48</id>
        <label>UBC</label>
    </interactant>
    <organismsDiffer>true</organismsDiffer>
    <experiments>2</experiments>
</comment>
<comment type="subcellular location">
    <subcellularLocation>
        <location evidence="6">Nucleus</location>
    </subcellularLocation>
    <subcellularLocation>
        <location evidence="6">Cytoplasm</location>
    </subcellularLocation>
</comment>
<comment type="alternative products">
    <event type="alternative splicing"/>
    <isoform>
        <id>Q84L31-1</id>
        <name>1</name>
        <name>alpha</name>
        <sequence type="displayed"/>
    </isoform>
    <isoform>
        <id>Q84L31-2</id>
        <name>2</name>
        <name>beta</name>
        <sequence type="described" ref="VSP_011876"/>
    </isoform>
</comment>
<comment type="tissue specificity">
    <text evidence="6">Widely expressed in the whole plant.</text>
</comment>
<comment type="disruption phenotype">
    <text evidence="6 8">No visible phenotype (PubMed:20086187). Increased UV sensitivity in hypocotyls, specifically in dark conditions (PubMed:29283431).</text>
</comment>
<comment type="similarity">
    <text evidence="11">Belongs to the RAD23 family.</text>
</comment>
<sequence>MKIFVKTLKGTHFEIEVKPEDSVVDVKKNIESVQGADVYPAAKQMLIHQGKVLKDETTIEENKVAENSFIVIMMNKSKPASAAASSASAGTSQAKSIPPSTSQPSISPQTPASVSAPVAPAPTRPPPPAPTPTPAPVAATETVTTPIPEPVPATISSSTPAPDSAPVGSQGDVYGQAASNLAAGSNLESTIQQILDMGGGTWDRETVVLALRAAFNNPERAVEYLYTGIPEQAEVPPVARPPASAGQPANPPAQTQQPAAAPASGPNANPLDLFPQGLPNVGGNPGAGTLDFLRNSQQFQALRAMVQANPQVLQPMLQELGKQNPNLMRLIQDHQADFLRLINEPVEGGGESGNLLGQMAAGMPQPQAIQVTHEEREAIERLEAMGFERALVLEVFFACNKNEELAANYLLDHMHEFEE</sequence>
<keyword id="KW-0025">Alternative splicing</keyword>
<keyword id="KW-0963">Cytoplasm</keyword>
<keyword id="KW-0227">DNA damage</keyword>
<keyword id="KW-0234">DNA repair</keyword>
<keyword id="KW-0539">Nucleus</keyword>
<keyword id="KW-1185">Reference proteome</keyword>
<keyword id="KW-0677">Repeat</keyword>
<organism>
    <name type="scientific">Arabidopsis thaliana</name>
    <name type="common">Mouse-ear cress</name>
    <dbReference type="NCBI Taxonomy" id="3702"/>
    <lineage>
        <taxon>Eukaryota</taxon>
        <taxon>Viridiplantae</taxon>
        <taxon>Streptophyta</taxon>
        <taxon>Embryophyta</taxon>
        <taxon>Tracheophyta</taxon>
        <taxon>Spermatophyta</taxon>
        <taxon>Magnoliopsida</taxon>
        <taxon>eudicotyledons</taxon>
        <taxon>Gunneridae</taxon>
        <taxon>Pentapetalae</taxon>
        <taxon>rosids</taxon>
        <taxon>malvids</taxon>
        <taxon>Brassicales</taxon>
        <taxon>Brassicaceae</taxon>
        <taxon>Camelineae</taxon>
        <taxon>Arabidopsis</taxon>
    </lineage>
</organism>
<evidence type="ECO:0000250" key="1"/>
<evidence type="ECO:0000255" key="2">
    <source>
        <dbReference type="PROSITE-ProRule" id="PRU00212"/>
    </source>
</evidence>
<evidence type="ECO:0000255" key="3">
    <source>
        <dbReference type="PROSITE-ProRule" id="PRU00214"/>
    </source>
</evidence>
<evidence type="ECO:0000256" key="4">
    <source>
        <dbReference type="SAM" id="MobiDB-lite"/>
    </source>
</evidence>
<evidence type="ECO:0000269" key="5">
    <source>
    </source>
</evidence>
<evidence type="ECO:0000269" key="6">
    <source>
    </source>
</evidence>
<evidence type="ECO:0000269" key="7">
    <source>
    </source>
</evidence>
<evidence type="ECO:0000269" key="8">
    <source>
    </source>
</evidence>
<evidence type="ECO:0000303" key="9">
    <source>
    </source>
</evidence>
<evidence type="ECO:0000303" key="10">
    <source ref="1"/>
</evidence>
<evidence type="ECO:0000305" key="11"/>
<evidence type="ECO:0000312" key="12">
    <source>
        <dbReference type="Araport" id="AT3G02540"/>
    </source>
</evidence>
<evidence type="ECO:0000312" key="13">
    <source>
        <dbReference type="EMBL" id="AAF32461.1"/>
    </source>
</evidence>
<reference key="1">
    <citation type="submission" date="2003-04" db="EMBL/GenBank/DDBJ databases">
        <title>Isolation of four RAD23 genes from Arabidopsis thaliana and detection of alternative splicing variants.</title>
        <authorList>
            <person name="Ishikawa Y."/>
            <person name="Endo M."/>
            <person name="Abe K."/>
            <person name="Osakabe K."/>
            <person name="Nakajima N."/>
            <person name="Saji H."/>
            <person name="Ito Y."/>
            <person name="Ichikawa H."/>
            <person name="Kameya T."/>
            <person name="Toki S."/>
        </authorList>
    </citation>
    <scope>NUCLEOTIDE SEQUENCE [MRNA] (ISOFORMS 1 AND 2)</scope>
    <source>
        <strain>cv. Columbia</strain>
        <tissue>Flower bud</tissue>
    </source>
</reference>
<reference key="2">
    <citation type="journal article" date="2000" name="Nature">
        <title>Sequence and analysis of chromosome 3 of the plant Arabidopsis thaliana.</title>
        <authorList>
            <person name="Salanoubat M."/>
            <person name="Lemcke K."/>
            <person name="Rieger M."/>
            <person name="Ansorge W."/>
            <person name="Unseld M."/>
            <person name="Fartmann B."/>
            <person name="Valle G."/>
            <person name="Bloecker H."/>
            <person name="Perez-Alonso M."/>
            <person name="Obermaier B."/>
            <person name="Delseny M."/>
            <person name="Boutry M."/>
            <person name="Grivell L.A."/>
            <person name="Mache R."/>
            <person name="Puigdomenech P."/>
            <person name="De Simone V."/>
            <person name="Choisne N."/>
            <person name="Artiguenave F."/>
            <person name="Robert C."/>
            <person name="Brottier P."/>
            <person name="Wincker P."/>
            <person name="Cattolico L."/>
            <person name="Weissenbach J."/>
            <person name="Saurin W."/>
            <person name="Quetier F."/>
            <person name="Schaefer M."/>
            <person name="Mueller-Auer S."/>
            <person name="Gabel C."/>
            <person name="Fuchs M."/>
            <person name="Benes V."/>
            <person name="Wurmbach E."/>
            <person name="Drzonek H."/>
            <person name="Erfle H."/>
            <person name="Jordan N."/>
            <person name="Bangert S."/>
            <person name="Wiedelmann R."/>
            <person name="Kranz H."/>
            <person name="Voss H."/>
            <person name="Holland R."/>
            <person name="Brandt P."/>
            <person name="Nyakatura G."/>
            <person name="Vezzi A."/>
            <person name="D'Angelo M."/>
            <person name="Pallavicini A."/>
            <person name="Toppo S."/>
            <person name="Simionati B."/>
            <person name="Conrad A."/>
            <person name="Hornischer K."/>
            <person name="Kauer G."/>
            <person name="Loehnert T.-H."/>
            <person name="Nordsiek G."/>
            <person name="Reichelt J."/>
            <person name="Scharfe M."/>
            <person name="Schoen O."/>
            <person name="Bargues M."/>
            <person name="Terol J."/>
            <person name="Climent J."/>
            <person name="Navarro P."/>
            <person name="Collado C."/>
            <person name="Perez-Perez A."/>
            <person name="Ottenwaelder B."/>
            <person name="Duchemin D."/>
            <person name="Cooke R."/>
            <person name="Laudie M."/>
            <person name="Berger-Llauro C."/>
            <person name="Purnelle B."/>
            <person name="Masuy D."/>
            <person name="de Haan M."/>
            <person name="Maarse A.C."/>
            <person name="Alcaraz J.-P."/>
            <person name="Cottet A."/>
            <person name="Casacuberta E."/>
            <person name="Monfort A."/>
            <person name="Argiriou A."/>
            <person name="Flores M."/>
            <person name="Liguori R."/>
            <person name="Vitale D."/>
            <person name="Mannhaupt G."/>
            <person name="Haase D."/>
            <person name="Schoof H."/>
            <person name="Rudd S."/>
            <person name="Zaccaria P."/>
            <person name="Mewes H.-W."/>
            <person name="Mayer K.F.X."/>
            <person name="Kaul S."/>
            <person name="Town C.D."/>
            <person name="Koo H.L."/>
            <person name="Tallon L.J."/>
            <person name="Jenkins J."/>
            <person name="Rooney T."/>
            <person name="Rizzo M."/>
            <person name="Walts A."/>
            <person name="Utterback T."/>
            <person name="Fujii C.Y."/>
            <person name="Shea T.P."/>
            <person name="Creasy T.H."/>
            <person name="Haas B."/>
            <person name="Maiti R."/>
            <person name="Wu D."/>
            <person name="Peterson J."/>
            <person name="Van Aken S."/>
            <person name="Pai G."/>
            <person name="Militscher J."/>
            <person name="Sellers P."/>
            <person name="Gill J.E."/>
            <person name="Feldblyum T.V."/>
            <person name="Preuss D."/>
            <person name="Lin X."/>
            <person name="Nierman W.C."/>
            <person name="Salzberg S.L."/>
            <person name="White O."/>
            <person name="Venter J.C."/>
            <person name="Fraser C.M."/>
            <person name="Kaneko T."/>
            <person name="Nakamura Y."/>
            <person name="Sato S."/>
            <person name="Kato T."/>
            <person name="Asamizu E."/>
            <person name="Sasamoto S."/>
            <person name="Kimura T."/>
            <person name="Idesawa K."/>
            <person name="Kawashima K."/>
            <person name="Kishida Y."/>
            <person name="Kiyokawa C."/>
            <person name="Kohara M."/>
            <person name="Matsumoto M."/>
            <person name="Matsuno A."/>
            <person name="Muraki A."/>
            <person name="Nakayama S."/>
            <person name="Nakazaki N."/>
            <person name="Shinpo S."/>
            <person name="Takeuchi C."/>
            <person name="Wada T."/>
            <person name="Watanabe A."/>
            <person name="Yamada M."/>
            <person name="Yasuda M."/>
            <person name="Tabata S."/>
        </authorList>
    </citation>
    <scope>NUCLEOTIDE SEQUENCE [LARGE SCALE GENOMIC DNA]</scope>
    <source>
        <strain>cv. Columbia</strain>
    </source>
</reference>
<reference key="3">
    <citation type="journal article" date="2017" name="Plant J.">
        <title>Araport11: a complete reannotation of the Arabidopsis thaliana reference genome.</title>
        <authorList>
            <person name="Cheng C.Y."/>
            <person name="Krishnakumar V."/>
            <person name="Chan A.P."/>
            <person name="Thibaud-Nissen F."/>
            <person name="Schobel S."/>
            <person name="Town C.D."/>
        </authorList>
    </citation>
    <scope>GENOME REANNOTATION</scope>
    <source>
        <strain>cv. Columbia</strain>
    </source>
</reference>
<reference key="4">
    <citation type="journal article" date="2003" name="Science">
        <title>Empirical analysis of transcriptional activity in the Arabidopsis genome.</title>
        <authorList>
            <person name="Yamada K."/>
            <person name="Lim J."/>
            <person name="Dale J.M."/>
            <person name="Chen H."/>
            <person name="Shinn P."/>
            <person name="Palm C.J."/>
            <person name="Southwick A.M."/>
            <person name="Wu H.C."/>
            <person name="Kim C.J."/>
            <person name="Nguyen M."/>
            <person name="Pham P.K."/>
            <person name="Cheuk R.F."/>
            <person name="Karlin-Newmann G."/>
            <person name="Liu S.X."/>
            <person name="Lam B."/>
            <person name="Sakano H."/>
            <person name="Wu T."/>
            <person name="Yu G."/>
            <person name="Miranda M."/>
            <person name="Quach H.L."/>
            <person name="Tripp M."/>
            <person name="Chang C.H."/>
            <person name="Lee J.M."/>
            <person name="Toriumi M.J."/>
            <person name="Chan M.M."/>
            <person name="Tang C.C."/>
            <person name="Onodera C.S."/>
            <person name="Deng J.M."/>
            <person name="Akiyama K."/>
            <person name="Ansari Y."/>
            <person name="Arakawa T."/>
            <person name="Banh J."/>
            <person name="Banno F."/>
            <person name="Bowser L."/>
            <person name="Brooks S.Y."/>
            <person name="Carninci P."/>
            <person name="Chao Q."/>
            <person name="Choy N."/>
            <person name="Enju A."/>
            <person name="Goldsmith A.D."/>
            <person name="Gurjal M."/>
            <person name="Hansen N.F."/>
            <person name="Hayashizaki Y."/>
            <person name="Johnson-Hopson C."/>
            <person name="Hsuan V.W."/>
            <person name="Iida K."/>
            <person name="Karnes M."/>
            <person name="Khan S."/>
            <person name="Koesema E."/>
            <person name="Ishida J."/>
            <person name="Jiang P.X."/>
            <person name="Jones T."/>
            <person name="Kawai J."/>
            <person name="Kamiya A."/>
            <person name="Meyers C."/>
            <person name="Nakajima M."/>
            <person name="Narusaka M."/>
            <person name="Seki M."/>
            <person name="Sakurai T."/>
            <person name="Satou M."/>
            <person name="Tamse R."/>
            <person name="Vaysberg M."/>
            <person name="Wallender E.K."/>
            <person name="Wong C."/>
            <person name="Yamamura Y."/>
            <person name="Yuan S."/>
            <person name="Shinozaki K."/>
            <person name="Davis R.W."/>
            <person name="Theologis A."/>
            <person name="Ecker J.R."/>
        </authorList>
    </citation>
    <scope>NUCLEOTIDE SEQUENCE [LARGE SCALE MRNA] (ISOFORM 1)</scope>
    <source>
        <strain>cv. Columbia</strain>
    </source>
</reference>
<reference key="5">
    <citation type="journal article" date="2010" name="FEBS J.">
        <title>Cross-species divergence of the major recognition pathways of ubiquitylated substrates for ubiquitin/26S proteasome-mediated proteolysis.</title>
        <authorList>
            <person name="Fatimababy A.S."/>
            <person name="Lin Y.L."/>
            <person name="Usharani R."/>
            <person name="Radjacommare R."/>
            <person name="Wang H.T."/>
            <person name="Tsai H.L."/>
            <person name="Lee Y."/>
            <person name="Fu H."/>
        </authorList>
    </citation>
    <scope>FUNCTION</scope>
    <scope>INTERACTION WITH RPN10</scope>
    <scope>POLYUBIQUITIN BINDING</scope>
</reference>
<reference key="6">
    <citation type="journal article" date="2010" name="Plant Cell">
        <title>The RAD23 family provides an essential connection between the 26S proteasome and ubiquitylated proteins in Arabidopsis.</title>
        <authorList>
            <person name="Farmer L.M."/>
            <person name="Book A.J."/>
            <person name="Lee K.H."/>
            <person name="Lin Y.L."/>
            <person name="Fu H."/>
            <person name="Vierstra R.D."/>
        </authorList>
    </citation>
    <scope>GENE FAMILY</scope>
    <scope>TISSUE SPECIFICITY</scope>
    <scope>SUBCELLULAR LOCATION</scope>
    <scope>POLYUBIQUITIN BINDING</scope>
    <scope>DISRUPTION PHENOTYPE</scope>
</reference>
<reference key="7">
    <citation type="journal article" date="2010" name="Trends Plant Sci.">
        <title>Proteasomal recognition of ubiquitylated substrates.</title>
        <authorList>
            <person name="Fu H."/>
            <person name="Lin Y.L."/>
            <person name="Fatimababy A.S."/>
        </authorList>
    </citation>
    <scope>REVIEW</scope>
</reference>
<reference key="8">
    <citation type="journal article" date="2011" name="Plant Cell">
        <title>The defective proteasome but not substrate recognition function is responsible for the null phenotypes of the Arabidopsis proteasome subunit RPN10.</title>
        <authorList>
            <person name="Lin Y.-L."/>
            <person name="Sung S.-C."/>
            <person name="Tsai H.-L."/>
            <person name="Yu T.-T."/>
            <person name="Radjacommare R."/>
            <person name="Usharani R."/>
            <person name="Fatimababy A.S."/>
            <person name="Lin H.-Y."/>
            <person name="Wang Y.-Y."/>
            <person name="Fu H."/>
        </authorList>
    </citation>
    <scope>FUNCTION</scope>
    <scope>POLYUBIQUITIN BINDING</scope>
    <scope>INTERACTION WITH RPN10</scope>
    <scope>MUTAGENESIS OF LEU-8 AND ILE-47</scope>
</reference>
<reference key="9">
    <citation type="journal article" date="2017" name="Genes (Basel)">
        <title>RAD4 and RAD23/HMR contribute to Arabidopsis UV tolerance.</title>
        <authorList>
            <person name="Lahari T."/>
            <person name="Lazaro J."/>
            <person name="Schroeder D.F."/>
        </authorList>
    </citation>
    <scope>FUNCTION</scope>
    <scope>DISRUPTION PHENOTYPE</scope>
    <source>
        <strain>cv. Columbia</strain>
    </source>
</reference>
<proteinExistence type="evidence at protein level"/>
<accession>Q84L31</accession>
<accession>Q9M887</accession>
<feature type="chain" id="PRO_0000114910" description="Ubiquitin receptor RAD23c">
    <location>
        <begin position="1"/>
        <end position="419"/>
    </location>
</feature>
<feature type="domain" description="Ubiquitin-like" evidence="3">
    <location>
        <begin position="1"/>
        <end position="79"/>
    </location>
</feature>
<feature type="domain" description="UBA 1" evidence="2">
    <location>
        <begin position="185"/>
        <end position="228"/>
    </location>
</feature>
<feature type="domain" description="STI1">
    <location>
        <begin position="288"/>
        <end position="331"/>
    </location>
</feature>
<feature type="domain" description="UBA 2" evidence="2">
    <location>
        <begin position="372"/>
        <end position="413"/>
    </location>
</feature>
<feature type="region of interest" description="Disordered" evidence="4">
    <location>
        <begin position="83"/>
        <end position="172"/>
    </location>
</feature>
<feature type="region of interest" description="Disordered" evidence="4">
    <location>
        <begin position="235"/>
        <end position="282"/>
    </location>
</feature>
<feature type="compositionally biased region" description="Low complexity" evidence="4">
    <location>
        <begin position="83"/>
        <end position="118"/>
    </location>
</feature>
<feature type="compositionally biased region" description="Pro residues" evidence="4">
    <location>
        <begin position="119"/>
        <end position="135"/>
    </location>
</feature>
<feature type="compositionally biased region" description="Low complexity" evidence="4">
    <location>
        <begin position="136"/>
        <end position="146"/>
    </location>
</feature>
<feature type="compositionally biased region" description="Low complexity" evidence="4">
    <location>
        <begin position="245"/>
        <end position="270"/>
    </location>
</feature>
<feature type="splice variant" id="VSP_011876" description="In isoform 2." evidence="10">
    <location>
        <begin position="58"/>
        <end position="139"/>
    </location>
</feature>
<feature type="mutagenesis site" description="Abolishes interaction with RPN10." evidence="7">
    <original>L</original>
    <variation>A</variation>
    <location>
        <position position="8"/>
    </location>
</feature>
<feature type="mutagenesis site" description="Abolishes interaction with RPN10." evidence="7">
    <original>I</original>
    <variation>A</variation>
    <location>
        <position position="47"/>
    </location>
</feature>
<name>RD23C_ARATH</name>
<protein>
    <recommendedName>
        <fullName evidence="9">Ubiquitin receptor RAD23c</fullName>
        <shortName evidence="9">AtRAD23c</shortName>
    </recommendedName>
    <alternativeName>
        <fullName evidence="10">Putative DNA repair protein RAD23-3</fullName>
    </alternativeName>
    <alternativeName>
        <fullName evidence="10">RAD23-like protein 3</fullName>
        <shortName evidence="10">AtRAD23-3</shortName>
    </alternativeName>
</protein>